<sequence>MFKKFDEKESVSNCIQLKTSVIKGIKSQLVEQFPGIEPWLNQIMPKKDPVKIVRCHEHTEILTVSGELLFFRQRKGPFCPTLRLLHKYPFILPHQQVDKGAIKFVLSGANIMCPGLTSPGAKLYPAAVDTIVAVTAEGKQHALCVGVMKMSAEDIEKVNKGIGIENIHYLNDGLWHMKTYK</sequence>
<feature type="chain" id="PRO_0000455534" description="Malignant T-cell-amplified sequence 2">
    <location>
        <begin position="1"/>
        <end position="181"/>
    </location>
</feature>
<feature type="domain" description="PUA" evidence="2">
    <location>
        <begin position="92"/>
        <end position="171"/>
    </location>
</feature>
<gene>
    <name evidence="5" type="primary">MCTS2</name>
</gene>
<comment type="subcellular location">
    <subcellularLocation>
        <location evidence="1">Cytoplasm</location>
    </subcellularLocation>
</comment>
<comment type="miscellaneous">
    <text evidence="4">Imprinted gene expressed from the paternal allele in fetal spinal cord.</text>
</comment>
<comment type="similarity">
    <text evidence="3">Belongs to the MCTS1 family.</text>
</comment>
<reference key="1">
    <citation type="journal article" date="2001" name="Nature">
        <title>The DNA sequence and comparative analysis of human chromosome 20.</title>
        <authorList>
            <person name="Deloukas P."/>
            <person name="Matthews L.H."/>
            <person name="Ashurst J.L."/>
            <person name="Burton J."/>
            <person name="Gilbert J.G.R."/>
            <person name="Jones M."/>
            <person name="Stavrides G."/>
            <person name="Almeida J.P."/>
            <person name="Babbage A.K."/>
            <person name="Bagguley C.L."/>
            <person name="Bailey J."/>
            <person name="Barlow K.F."/>
            <person name="Bates K.N."/>
            <person name="Beard L.M."/>
            <person name="Beare D.M."/>
            <person name="Beasley O.P."/>
            <person name="Bird C.P."/>
            <person name="Blakey S.E."/>
            <person name="Bridgeman A.M."/>
            <person name="Brown A.J."/>
            <person name="Buck D."/>
            <person name="Burrill W.D."/>
            <person name="Butler A.P."/>
            <person name="Carder C."/>
            <person name="Carter N.P."/>
            <person name="Chapman J.C."/>
            <person name="Clamp M."/>
            <person name="Clark G."/>
            <person name="Clark L.N."/>
            <person name="Clark S.Y."/>
            <person name="Clee C.M."/>
            <person name="Clegg S."/>
            <person name="Cobley V.E."/>
            <person name="Collier R.E."/>
            <person name="Connor R.E."/>
            <person name="Corby N.R."/>
            <person name="Coulson A."/>
            <person name="Coville G.J."/>
            <person name="Deadman R."/>
            <person name="Dhami P.D."/>
            <person name="Dunn M."/>
            <person name="Ellington A.G."/>
            <person name="Frankland J.A."/>
            <person name="Fraser A."/>
            <person name="French L."/>
            <person name="Garner P."/>
            <person name="Grafham D.V."/>
            <person name="Griffiths C."/>
            <person name="Griffiths M.N.D."/>
            <person name="Gwilliam R."/>
            <person name="Hall R.E."/>
            <person name="Hammond S."/>
            <person name="Harley J.L."/>
            <person name="Heath P.D."/>
            <person name="Ho S."/>
            <person name="Holden J.L."/>
            <person name="Howden P.J."/>
            <person name="Huckle E."/>
            <person name="Hunt A.R."/>
            <person name="Hunt S.E."/>
            <person name="Jekosch K."/>
            <person name="Johnson C.M."/>
            <person name="Johnson D."/>
            <person name="Kay M.P."/>
            <person name="Kimberley A.M."/>
            <person name="King A."/>
            <person name="Knights A."/>
            <person name="Laird G.K."/>
            <person name="Lawlor S."/>
            <person name="Lehvaeslaiho M.H."/>
            <person name="Leversha M.A."/>
            <person name="Lloyd C."/>
            <person name="Lloyd D.M."/>
            <person name="Lovell J.D."/>
            <person name="Marsh V.L."/>
            <person name="Martin S.L."/>
            <person name="McConnachie L.J."/>
            <person name="McLay K."/>
            <person name="McMurray A.A."/>
            <person name="Milne S.A."/>
            <person name="Mistry D."/>
            <person name="Moore M.J.F."/>
            <person name="Mullikin J.C."/>
            <person name="Nickerson T."/>
            <person name="Oliver K."/>
            <person name="Parker A."/>
            <person name="Patel R."/>
            <person name="Pearce T.A.V."/>
            <person name="Peck A.I."/>
            <person name="Phillimore B.J.C.T."/>
            <person name="Prathalingam S.R."/>
            <person name="Plumb R.W."/>
            <person name="Ramsay H."/>
            <person name="Rice C.M."/>
            <person name="Ross M.T."/>
            <person name="Scott C.E."/>
            <person name="Sehra H.K."/>
            <person name="Shownkeen R."/>
            <person name="Sims S."/>
            <person name="Skuce C.D."/>
            <person name="Smith M.L."/>
            <person name="Soderlund C."/>
            <person name="Steward C.A."/>
            <person name="Sulston J.E."/>
            <person name="Swann R.M."/>
            <person name="Sycamore N."/>
            <person name="Taylor R."/>
            <person name="Tee L."/>
            <person name="Thomas D.W."/>
            <person name="Thorpe A."/>
            <person name="Tracey A."/>
            <person name="Tromans A.C."/>
            <person name="Vaudin M."/>
            <person name="Wall M."/>
            <person name="Wallis J.M."/>
            <person name="Whitehead S.L."/>
            <person name="Whittaker P."/>
            <person name="Willey D.L."/>
            <person name="Williams L."/>
            <person name="Williams S.A."/>
            <person name="Wilming L."/>
            <person name="Wray P.W."/>
            <person name="Hubbard T."/>
            <person name="Durbin R.M."/>
            <person name="Bentley D.R."/>
            <person name="Beck S."/>
            <person name="Rogers J."/>
        </authorList>
    </citation>
    <scope>NUCLEOTIDE SEQUENCE [LARGE SCALE GENOMIC DNA]</scope>
</reference>
<reference key="2">
    <citation type="journal article" date="2007" name="PLoS Genet.">
        <title>A screen for retrotransposed imprinted genes reveals an association between X chromosome homology and maternal germ-line methylation.</title>
        <authorList>
            <person name="Wood A.J."/>
            <person name="Roberts R.G."/>
            <person name="Monk D."/>
            <person name="Moore G.E."/>
            <person name="Schulz R."/>
            <person name="Oakey R.J."/>
        </authorList>
    </citation>
    <scope>IMPRINTING</scope>
    <scope>MISCELLANEOUS</scope>
</reference>
<accession>A0A3B3IRV3</accession>
<keyword id="KW-0963">Cytoplasm</keyword>
<keyword id="KW-1267">Proteomics identification</keyword>
<keyword id="KW-1185">Reference proteome</keyword>
<organism>
    <name type="scientific">Homo sapiens</name>
    <name type="common">Human</name>
    <dbReference type="NCBI Taxonomy" id="9606"/>
    <lineage>
        <taxon>Eukaryota</taxon>
        <taxon>Metazoa</taxon>
        <taxon>Chordata</taxon>
        <taxon>Craniata</taxon>
        <taxon>Vertebrata</taxon>
        <taxon>Euteleostomi</taxon>
        <taxon>Mammalia</taxon>
        <taxon>Eutheria</taxon>
        <taxon>Euarchontoglires</taxon>
        <taxon>Primates</taxon>
        <taxon>Haplorrhini</taxon>
        <taxon>Catarrhini</taxon>
        <taxon>Hominidae</taxon>
        <taxon>Homo</taxon>
    </lineage>
</organism>
<protein>
    <recommendedName>
        <fullName evidence="3">Malignant T-cell-amplified sequence 2</fullName>
    </recommendedName>
</protein>
<evidence type="ECO:0000250" key="1">
    <source>
        <dbReference type="UniProtKB" id="Q9ULC4"/>
    </source>
</evidence>
<evidence type="ECO:0000255" key="2">
    <source>
        <dbReference type="PROSITE-ProRule" id="PRU00161"/>
    </source>
</evidence>
<evidence type="ECO:0000305" key="3"/>
<evidence type="ECO:0000305" key="4">
    <source>
    </source>
</evidence>
<evidence type="ECO:0000312" key="5">
    <source>
        <dbReference type="HGNC" id="HGNC:49760"/>
    </source>
</evidence>
<dbReference type="EMBL" id="AL110115">
    <property type="status" value="NOT_ANNOTATED_CDS"/>
    <property type="molecule type" value="Genomic_DNA"/>
</dbReference>
<dbReference type="CCDS" id="CCDS93025.1"/>
<dbReference type="RefSeq" id="NP_001384425.1">
    <property type="nucleotide sequence ID" value="NM_001397496.1"/>
</dbReference>
<dbReference type="SMR" id="A0A3B3IRV3"/>
<dbReference type="FunCoup" id="A0A3B3IRV3">
    <property type="interactions" value="440"/>
</dbReference>
<dbReference type="STRING" id="9606.ENSP00000496921"/>
<dbReference type="jPOST" id="A0A3B3IRV3"/>
<dbReference type="MassIVE" id="A0A3B3IRV3"/>
<dbReference type="PeptideAtlas" id="A0A3B3IRV3"/>
<dbReference type="Ensembl" id="ENST00000394552.4">
    <property type="protein sequence ID" value="ENSP00000496921.1"/>
    <property type="gene ID" value="ENSG00000101898.8"/>
</dbReference>
<dbReference type="Ensembl" id="ENST00000718306.1">
    <property type="protein sequence ID" value="ENSP00000520739.1"/>
    <property type="gene ID" value="ENSG00000101898.8"/>
</dbReference>
<dbReference type="GeneID" id="100101490"/>
<dbReference type="MANE-Select" id="ENST00000394552.4">
    <property type="protein sequence ID" value="ENSP00000496921.1"/>
    <property type="RefSeq nucleotide sequence ID" value="NM_001397496.1"/>
    <property type="RefSeq protein sequence ID" value="NP_001384425.1"/>
</dbReference>
<dbReference type="AGR" id="HGNC:49760"/>
<dbReference type="GeneCards" id="MCTS2"/>
<dbReference type="HGNC" id="HGNC:49760">
    <property type="gene designation" value="MCTS2"/>
</dbReference>
<dbReference type="HPA" id="ENSG00000101898">
    <property type="expression patterns" value="Low tissue specificity"/>
</dbReference>
<dbReference type="MIM" id="620406">
    <property type="type" value="gene"/>
</dbReference>
<dbReference type="VEuPathDB" id="HostDB:ENSG00000101898"/>
<dbReference type="GeneTree" id="ENSGT00550000074964"/>
<dbReference type="InParanoid" id="A0A3B3IRV3"/>
<dbReference type="OMA" id="WEYGDDY"/>
<dbReference type="OrthoDB" id="10249667at2759"/>
<dbReference type="PAN-GO" id="A0A3B3IRV3">
    <property type="GO annotations" value="1 GO annotation based on evolutionary models"/>
</dbReference>
<dbReference type="PRO" id="PR:A0A3B3IRV3"/>
<dbReference type="Proteomes" id="UP000005640">
    <property type="component" value="Chromosome 20"/>
</dbReference>
<dbReference type="Bgee" id="ENSG00000101898">
    <property type="expression patterns" value="Expressed in primordial germ cell in gonad and 96 other cell types or tissues"/>
</dbReference>
<dbReference type="GO" id="GO:0005737">
    <property type="term" value="C:cytoplasm"/>
    <property type="evidence" value="ECO:0007669"/>
    <property type="project" value="UniProtKB-SubCell"/>
</dbReference>
<dbReference type="GO" id="GO:0003723">
    <property type="term" value="F:RNA binding"/>
    <property type="evidence" value="ECO:0007669"/>
    <property type="project" value="InterPro"/>
</dbReference>
<dbReference type="GO" id="GO:0001731">
    <property type="term" value="P:formation of translation preinitiation complex"/>
    <property type="evidence" value="ECO:0000318"/>
    <property type="project" value="GO_Central"/>
</dbReference>
<dbReference type="CDD" id="cd11609">
    <property type="entry name" value="MCT1_N"/>
    <property type="match status" value="1"/>
</dbReference>
<dbReference type="CDD" id="cd21155">
    <property type="entry name" value="PUA_MCTS-1-like"/>
    <property type="match status" value="1"/>
</dbReference>
<dbReference type="FunFam" id="3.10.400.20:FF:000001">
    <property type="entry name" value="Malignant T-cell-amplified sequence 1"/>
    <property type="match status" value="1"/>
</dbReference>
<dbReference type="Gene3D" id="3.10.400.20">
    <property type="match status" value="1"/>
</dbReference>
<dbReference type="InterPro" id="IPR016437">
    <property type="entry name" value="MCT-1/Tma20"/>
</dbReference>
<dbReference type="InterPro" id="IPR041366">
    <property type="entry name" value="Pre-PUA"/>
</dbReference>
<dbReference type="InterPro" id="IPR002478">
    <property type="entry name" value="PUA"/>
</dbReference>
<dbReference type="InterPro" id="IPR015947">
    <property type="entry name" value="PUA-like_sf"/>
</dbReference>
<dbReference type="InterPro" id="IPR004521">
    <property type="entry name" value="Uncharacterised_CHP00451"/>
</dbReference>
<dbReference type="NCBIfam" id="TIGR00451">
    <property type="entry name" value="unchar_dom_2"/>
    <property type="match status" value="1"/>
</dbReference>
<dbReference type="PANTHER" id="PTHR22798:SF11">
    <property type="entry name" value="MALIGNANT T-CELL-AMPLIFIED SEQUENCE 2"/>
    <property type="match status" value="1"/>
</dbReference>
<dbReference type="PANTHER" id="PTHR22798">
    <property type="entry name" value="MCT-1 PROTEIN"/>
    <property type="match status" value="1"/>
</dbReference>
<dbReference type="Pfam" id="PF17832">
    <property type="entry name" value="Pre-PUA"/>
    <property type="match status" value="1"/>
</dbReference>
<dbReference type="Pfam" id="PF01472">
    <property type="entry name" value="PUA"/>
    <property type="match status" value="1"/>
</dbReference>
<dbReference type="PIRSF" id="PIRSF005067">
    <property type="entry name" value="Tma_RNA-bind_prd"/>
    <property type="match status" value="1"/>
</dbReference>
<dbReference type="SMART" id="SM00359">
    <property type="entry name" value="PUA"/>
    <property type="match status" value="1"/>
</dbReference>
<dbReference type="SUPFAM" id="SSF88697">
    <property type="entry name" value="PUA domain-like"/>
    <property type="match status" value="1"/>
</dbReference>
<dbReference type="PROSITE" id="PS50890">
    <property type="entry name" value="PUA"/>
    <property type="match status" value="1"/>
</dbReference>
<name>MCTS2_HUMAN</name>
<proteinExistence type="evidence at protein level"/>